<accession>P0CO19</accession>
<accession>Q55LY7</accession>
<accession>Q5K8T2</accession>
<reference key="1">
    <citation type="journal article" date="2005" name="Science">
        <title>The genome of the basidiomycetous yeast and human pathogen Cryptococcus neoformans.</title>
        <authorList>
            <person name="Loftus B.J."/>
            <person name="Fung E."/>
            <person name="Roncaglia P."/>
            <person name="Rowley D."/>
            <person name="Amedeo P."/>
            <person name="Bruno D."/>
            <person name="Vamathevan J."/>
            <person name="Miranda M."/>
            <person name="Anderson I.J."/>
            <person name="Fraser J.A."/>
            <person name="Allen J.E."/>
            <person name="Bosdet I.E."/>
            <person name="Brent M.R."/>
            <person name="Chiu R."/>
            <person name="Doering T.L."/>
            <person name="Donlin M.J."/>
            <person name="D'Souza C.A."/>
            <person name="Fox D.S."/>
            <person name="Grinberg V."/>
            <person name="Fu J."/>
            <person name="Fukushima M."/>
            <person name="Haas B.J."/>
            <person name="Huang J.C."/>
            <person name="Janbon G."/>
            <person name="Jones S.J.M."/>
            <person name="Koo H.L."/>
            <person name="Krzywinski M.I."/>
            <person name="Kwon-Chung K.J."/>
            <person name="Lengeler K.B."/>
            <person name="Maiti R."/>
            <person name="Marra M.A."/>
            <person name="Marra R.E."/>
            <person name="Mathewson C.A."/>
            <person name="Mitchell T.G."/>
            <person name="Pertea M."/>
            <person name="Riggs F.R."/>
            <person name="Salzberg S.L."/>
            <person name="Schein J.E."/>
            <person name="Shvartsbeyn A."/>
            <person name="Shin H."/>
            <person name="Shumway M."/>
            <person name="Specht C.A."/>
            <person name="Suh B.B."/>
            <person name="Tenney A."/>
            <person name="Utterback T.R."/>
            <person name="Wickes B.L."/>
            <person name="Wortman J.R."/>
            <person name="Wye N.H."/>
            <person name="Kronstad J.W."/>
            <person name="Lodge J.K."/>
            <person name="Heitman J."/>
            <person name="Davis R.W."/>
            <person name="Fraser C.M."/>
            <person name="Hyman R.W."/>
        </authorList>
    </citation>
    <scope>NUCLEOTIDE SEQUENCE [LARGE SCALE GENOMIC DNA]</scope>
    <source>
        <strain>B-3501A</strain>
    </source>
</reference>
<proteinExistence type="inferred from homology"/>
<dbReference type="EC" id="3.6.4.12"/>
<dbReference type="EMBL" id="AAEY01000044">
    <property type="protein sequence ID" value="EAL18964.1"/>
    <property type="molecule type" value="Genomic_DNA"/>
</dbReference>
<dbReference type="RefSeq" id="XP_773611.1">
    <property type="nucleotide sequence ID" value="XM_768518.1"/>
</dbReference>
<dbReference type="SMR" id="P0CO19"/>
<dbReference type="EnsemblFungi" id="AAW46488">
    <property type="protein sequence ID" value="AAW46488"/>
    <property type="gene ID" value="CNL04590"/>
</dbReference>
<dbReference type="GeneID" id="4938185"/>
<dbReference type="KEGG" id="cnb:CNBI2250"/>
<dbReference type="VEuPathDB" id="FungiDB:CNBI2250"/>
<dbReference type="HOGENOM" id="CLU_000315_24_1_1"/>
<dbReference type="OrthoDB" id="5345at5206"/>
<dbReference type="GO" id="GO:0000812">
    <property type="term" value="C:Swr1 complex"/>
    <property type="evidence" value="ECO:0007669"/>
    <property type="project" value="TreeGrafter"/>
</dbReference>
<dbReference type="GO" id="GO:0005524">
    <property type="term" value="F:ATP binding"/>
    <property type="evidence" value="ECO:0007669"/>
    <property type="project" value="UniProtKB-KW"/>
</dbReference>
<dbReference type="GO" id="GO:0016887">
    <property type="term" value="F:ATP hydrolysis activity"/>
    <property type="evidence" value="ECO:0007669"/>
    <property type="project" value="TreeGrafter"/>
</dbReference>
<dbReference type="GO" id="GO:0003677">
    <property type="term" value="F:DNA binding"/>
    <property type="evidence" value="ECO:0007669"/>
    <property type="project" value="UniProtKB-KW"/>
</dbReference>
<dbReference type="GO" id="GO:0004386">
    <property type="term" value="F:helicase activity"/>
    <property type="evidence" value="ECO:0007669"/>
    <property type="project" value="UniProtKB-KW"/>
</dbReference>
<dbReference type="GO" id="GO:0042393">
    <property type="term" value="F:histone binding"/>
    <property type="evidence" value="ECO:0007669"/>
    <property type="project" value="TreeGrafter"/>
</dbReference>
<dbReference type="GO" id="GO:0006338">
    <property type="term" value="P:chromatin remodeling"/>
    <property type="evidence" value="ECO:0007669"/>
    <property type="project" value="TreeGrafter"/>
</dbReference>
<dbReference type="CDD" id="cd18003">
    <property type="entry name" value="DEXQc_SRCAP"/>
    <property type="match status" value="1"/>
</dbReference>
<dbReference type="CDD" id="cd18793">
    <property type="entry name" value="SF2_C_SNF"/>
    <property type="match status" value="1"/>
</dbReference>
<dbReference type="FunFam" id="3.40.50.10810:FF:000051">
    <property type="entry name" value="Helicase SWR1"/>
    <property type="match status" value="1"/>
</dbReference>
<dbReference type="Gene3D" id="3.40.50.300">
    <property type="entry name" value="P-loop containing nucleotide triphosphate hydrolases"/>
    <property type="match status" value="1"/>
</dbReference>
<dbReference type="Gene3D" id="1.20.120.850">
    <property type="entry name" value="SWI2/SNF2 ATPases, N-terminal domain"/>
    <property type="match status" value="1"/>
</dbReference>
<dbReference type="Gene3D" id="3.40.50.10810">
    <property type="entry name" value="Tandem AAA-ATPase domain"/>
    <property type="match status" value="1"/>
</dbReference>
<dbReference type="InterPro" id="IPR014001">
    <property type="entry name" value="Helicase_ATP-bd"/>
</dbReference>
<dbReference type="InterPro" id="IPR001650">
    <property type="entry name" value="Helicase_C-like"/>
</dbReference>
<dbReference type="InterPro" id="IPR050520">
    <property type="entry name" value="INO80/SWR1_helicase"/>
</dbReference>
<dbReference type="InterPro" id="IPR027417">
    <property type="entry name" value="P-loop_NTPase"/>
</dbReference>
<dbReference type="InterPro" id="IPR038718">
    <property type="entry name" value="SNF2-like_sf"/>
</dbReference>
<dbReference type="InterPro" id="IPR049730">
    <property type="entry name" value="SNF2/RAD54-like_C"/>
</dbReference>
<dbReference type="InterPro" id="IPR000330">
    <property type="entry name" value="SNF2_N"/>
</dbReference>
<dbReference type="PANTHER" id="PTHR45685:SF1">
    <property type="entry name" value="HELICASE SRCAP"/>
    <property type="match status" value="1"/>
</dbReference>
<dbReference type="PANTHER" id="PTHR45685">
    <property type="entry name" value="HELICASE SRCAP-RELATED"/>
    <property type="match status" value="1"/>
</dbReference>
<dbReference type="Pfam" id="PF00271">
    <property type="entry name" value="Helicase_C"/>
    <property type="match status" value="1"/>
</dbReference>
<dbReference type="Pfam" id="PF00176">
    <property type="entry name" value="SNF2-rel_dom"/>
    <property type="match status" value="1"/>
</dbReference>
<dbReference type="SMART" id="SM00487">
    <property type="entry name" value="DEXDc"/>
    <property type="match status" value="1"/>
</dbReference>
<dbReference type="SMART" id="SM00490">
    <property type="entry name" value="HELICc"/>
    <property type="match status" value="1"/>
</dbReference>
<dbReference type="SUPFAM" id="SSF52540">
    <property type="entry name" value="P-loop containing nucleoside triphosphate hydrolases"/>
    <property type="match status" value="2"/>
</dbReference>
<dbReference type="PROSITE" id="PS51192">
    <property type="entry name" value="HELICASE_ATP_BIND_1"/>
    <property type="match status" value="1"/>
</dbReference>
<dbReference type="PROSITE" id="PS51194">
    <property type="entry name" value="HELICASE_CTER"/>
    <property type="match status" value="1"/>
</dbReference>
<feature type="chain" id="PRO_0000410114" description="Helicase SWR1">
    <location>
        <begin position="1"/>
        <end position="1246"/>
    </location>
</feature>
<feature type="domain" description="Helicase ATP-binding" evidence="2">
    <location>
        <begin position="405"/>
        <end position="570"/>
    </location>
</feature>
<feature type="domain" description="Helicase C-terminal" evidence="3">
    <location>
        <begin position="939"/>
        <end position="1092"/>
    </location>
</feature>
<feature type="region of interest" description="Disordered" evidence="4">
    <location>
        <begin position="1"/>
        <end position="53"/>
    </location>
</feature>
<feature type="region of interest" description="Disordered" evidence="4">
    <location>
        <begin position="60"/>
        <end position="79"/>
    </location>
</feature>
<feature type="region of interest" description="Disordered" evidence="4">
    <location>
        <begin position="109"/>
        <end position="188"/>
    </location>
</feature>
<feature type="region of interest" description="Disordered" evidence="4">
    <location>
        <begin position="202"/>
        <end position="292"/>
    </location>
</feature>
<feature type="region of interest" description="Disordered" evidence="4">
    <location>
        <begin position="314"/>
        <end position="381"/>
    </location>
</feature>
<feature type="short sequence motif" description="DEAH box">
    <location>
        <begin position="521"/>
        <end position="524"/>
    </location>
</feature>
<feature type="compositionally biased region" description="Basic and acidic residues" evidence="4">
    <location>
        <begin position="27"/>
        <end position="52"/>
    </location>
</feature>
<feature type="compositionally biased region" description="Acidic residues" evidence="4">
    <location>
        <begin position="149"/>
        <end position="166"/>
    </location>
</feature>
<feature type="compositionally biased region" description="Basic and acidic residues" evidence="4">
    <location>
        <begin position="167"/>
        <end position="178"/>
    </location>
</feature>
<feature type="compositionally biased region" description="Polar residues" evidence="4">
    <location>
        <begin position="226"/>
        <end position="255"/>
    </location>
</feature>
<feature type="compositionally biased region" description="Acidic residues" evidence="4">
    <location>
        <begin position="320"/>
        <end position="331"/>
    </location>
</feature>
<feature type="compositionally biased region" description="Acidic residues" evidence="4">
    <location>
        <begin position="338"/>
        <end position="362"/>
    </location>
</feature>
<feature type="compositionally biased region" description="Basic and acidic residues" evidence="4">
    <location>
        <begin position="363"/>
        <end position="381"/>
    </location>
</feature>
<feature type="binding site" evidence="2">
    <location>
        <begin position="418"/>
        <end position="425"/>
    </location>
    <ligand>
        <name>ATP</name>
        <dbReference type="ChEBI" id="CHEBI:30616"/>
    </ligand>
</feature>
<sequence length="1246" mass="141185">MSEHNQDLRFLISDDVLNEDPMSTGRFAEEDRGSSDTEQLTDNKNDGEEPKETAVQAAFDGSDDVNRLEEPHNPVSSTANIGNFALLESSSAEVSDASCPATMPILVRQSPKTCSQPRTRKVKLSTLSLSSDPDPDINDPEFKARLEDSNQDDQDEELDLEMEEADSAGRESGEGNRDSEDEGLLADADLPIEVLLRRYGYPVPEGEGAVNGEPEQSESKGREQAAPTSTVSETLPSTKLSLAQPANQTDQSLTDTALPEPRVPEQLIISGKRQRRKKEIWTPDDSEPQHLVGKKRIKKVEIVEKVEADVHQNGDGLVIVEEETMGDEDNDDSKVGQEEEDGHEYDSEEEYDEDEDEEEEGAKEDNVDWDDRQDKEGDIGPRVRQPFLLRGTLRPYQQAGLEWLASLWSNNMNGILADEMGLGKTIQTIALLGHLACDKGVWGQHLIIVPTSVILNWEMEFKKFLPGMKVLTYYGNQKERKEKRVGWHTENTWQVCITSYQIVLADQHIFRRKNWCYMILDEAHNIKNFRSQRWQTLLGFKAQRRLLLTGTPLQNNLMELWSLLYFLMPGGIGADATAVVGFANHKEFMEWFSNPMDKAIETGDAMDEETLETVAKLHTLLRPFILRRLKSEVETQLPGKFEHVVYCRLSKRQRFLYDEFMSRASTHEALTTGGYLGVMNTLMQLRKVCNHPDLFEMRPVKTSFAMDNVARDFEPSDILIRKRLLAEEDERRIDALAIGFGVAHNEAMSGWVARARQTYDASDKLPYAASPLRRGKLSAPPPKDTRSVELWLKYRVWAEEEFSKRRWESIRATNRQRCGISPIYGSTFLSLLGNLPNFLLPQDVQSRREETFADFTPPAAKFITSLPERAKSLEDVIDRFAVIPPNAVARNLATYALPGLEPISHPALTDPAFDTLHRSSVKLQIAFPDASLLQYDCGKLQKLFEMLRDLKSEGHRVLIFTQMTRVLDILEMFLSHNGHRYLRLDGSTKIEDRQVLTERFNSDSRIFVFIASSRSGGVGINLTGADTVFFYDSDWNPSMDRQCMDRAHRIGQTREVHIYRFVSSHTVEENMLRKAEQKRLLDKMVIQEGGFNNDWWGRVGWKDMFGDVPGITDVSGVVEKSGEGIIDIQVEGTPVAEDVEVTRPRAGEERELARALAEVEDEEDAQAARMAQGEGELDLQEFEEGPKAVAKRVRVFEPENSGTPVTTEAGETGDVVEEYDDEPGSVEEYMLKWVEEDWDYFSPYRA</sequence>
<keyword id="KW-0010">Activator</keyword>
<keyword id="KW-0067">ATP-binding</keyword>
<keyword id="KW-0156">Chromatin regulator</keyword>
<keyword id="KW-0238">DNA-binding</keyword>
<keyword id="KW-0347">Helicase</keyword>
<keyword id="KW-0378">Hydrolase</keyword>
<keyword id="KW-0547">Nucleotide-binding</keyword>
<keyword id="KW-0539">Nucleus</keyword>
<keyword id="KW-0804">Transcription</keyword>
<keyword id="KW-0805">Transcription regulation</keyword>
<evidence type="ECO:0000250" key="1"/>
<evidence type="ECO:0000255" key="2">
    <source>
        <dbReference type="PROSITE-ProRule" id="PRU00541"/>
    </source>
</evidence>
<evidence type="ECO:0000255" key="3">
    <source>
        <dbReference type="PROSITE-ProRule" id="PRU00542"/>
    </source>
</evidence>
<evidence type="ECO:0000256" key="4">
    <source>
        <dbReference type="SAM" id="MobiDB-lite"/>
    </source>
</evidence>
<evidence type="ECO:0000305" key="5"/>
<name>SWR1_CRYNB</name>
<comment type="function">
    <text evidence="1">Catalytic component of the SWR1 complex which mediates the ATP-dependent exchange of histone H2A for the H2A variant HZT1 leading to transcriptional regulation of selected genes by chromatin remodeling.</text>
</comment>
<comment type="catalytic activity">
    <reaction>
        <text>ATP + H2O = ADP + phosphate + H(+)</text>
        <dbReference type="Rhea" id="RHEA:13065"/>
        <dbReference type="ChEBI" id="CHEBI:15377"/>
        <dbReference type="ChEBI" id="CHEBI:15378"/>
        <dbReference type="ChEBI" id="CHEBI:30616"/>
        <dbReference type="ChEBI" id="CHEBI:43474"/>
        <dbReference type="ChEBI" id="CHEBI:456216"/>
        <dbReference type="EC" id="3.6.4.12"/>
    </reaction>
</comment>
<comment type="subunit">
    <text evidence="1">Component of the SWR1 chromatin-remodeling complex.</text>
</comment>
<comment type="subcellular location">
    <subcellularLocation>
        <location evidence="1">Nucleus</location>
    </subcellularLocation>
</comment>
<comment type="similarity">
    <text evidence="5">Belongs to the SNF2/RAD54 helicase family. SWR1 subfamily.</text>
</comment>
<gene>
    <name type="primary">SWR1</name>
    <name type="ordered locus">CNBI2250</name>
</gene>
<protein>
    <recommendedName>
        <fullName>Helicase SWR1</fullName>
        <ecNumber>3.6.4.12</ecNumber>
    </recommendedName>
</protein>
<organism>
    <name type="scientific">Cryptococcus neoformans var. neoformans serotype D (strain B-3501A)</name>
    <name type="common">Filobasidiella neoformans</name>
    <dbReference type="NCBI Taxonomy" id="283643"/>
    <lineage>
        <taxon>Eukaryota</taxon>
        <taxon>Fungi</taxon>
        <taxon>Dikarya</taxon>
        <taxon>Basidiomycota</taxon>
        <taxon>Agaricomycotina</taxon>
        <taxon>Tremellomycetes</taxon>
        <taxon>Tremellales</taxon>
        <taxon>Cryptococcaceae</taxon>
        <taxon>Cryptococcus</taxon>
        <taxon>Cryptococcus neoformans species complex</taxon>
    </lineage>
</organism>